<sequence length="305" mass="35414">MNFQEIILALNQFWGEQGCIIQQPYDVEKGAGTMNPATFLRALGPEPWNVAYVEPSRRPTDGRYGENPNRLQHYYQYQVILKPSPDDVLEMYLDSLRRLGIDPLKHDIRFVEDNWESPTLGAWGLGWEVWLDGMEVTQFTYFQQCGGIDCRPVCAEITYGIERIAMFIQQKDSVYDIEWVEGITYGDVHHQGEVDYSHYNFEVADTAALFTFFDMYEKEALRVIEKGLVQPAYDYVLKCSHTFNLLDARGAISVTERTSFITRVRHLARVCAQAYVKQRERLRYPLIKDPAQRQRLGLDRENTGE</sequence>
<protein>
    <recommendedName>
        <fullName evidence="1">Glycine--tRNA ligase alpha subunit</fullName>
        <ecNumber evidence="1">6.1.1.14</ecNumber>
    </recommendedName>
    <alternativeName>
        <fullName evidence="1">Glycyl-tRNA synthetase alpha subunit</fullName>
        <shortName evidence="1">GlyRS</shortName>
    </alternativeName>
</protein>
<organism>
    <name type="scientific">Heliobacterium modesticaldum (strain ATCC 51547 / Ice1)</name>
    <dbReference type="NCBI Taxonomy" id="498761"/>
    <lineage>
        <taxon>Bacteria</taxon>
        <taxon>Bacillati</taxon>
        <taxon>Bacillota</taxon>
        <taxon>Clostridia</taxon>
        <taxon>Eubacteriales</taxon>
        <taxon>Heliobacteriaceae</taxon>
        <taxon>Heliomicrobium</taxon>
    </lineage>
</organism>
<proteinExistence type="inferred from homology"/>
<keyword id="KW-0030">Aminoacyl-tRNA synthetase</keyword>
<keyword id="KW-0067">ATP-binding</keyword>
<keyword id="KW-0963">Cytoplasm</keyword>
<keyword id="KW-0436">Ligase</keyword>
<keyword id="KW-0547">Nucleotide-binding</keyword>
<keyword id="KW-0648">Protein biosynthesis</keyword>
<keyword id="KW-1185">Reference proteome</keyword>
<dbReference type="EC" id="6.1.1.14" evidence="1"/>
<dbReference type="EMBL" id="CP000930">
    <property type="protein sequence ID" value="ABZ85007.1"/>
    <property type="molecule type" value="Genomic_DNA"/>
</dbReference>
<dbReference type="RefSeq" id="WP_012283503.1">
    <property type="nucleotide sequence ID" value="NC_010337.2"/>
</dbReference>
<dbReference type="SMR" id="B0TAF7"/>
<dbReference type="STRING" id="498761.HM1_2457"/>
<dbReference type="KEGG" id="hmo:HM1_2457"/>
<dbReference type="eggNOG" id="COG0752">
    <property type="taxonomic scope" value="Bacteria"/>
</dbReference>
<dbReference type="HOGENOM" id="CLU_057066_1_0_9"/>
<dbReference type="OrthoDB" id="9802183at2"/>
<dbReference type="Proteomes" id="UP000008550">
    <property type="component" value="Chromosome"/>
</dbReference>
<dbReference type="GO" id="GO:0005829">
    <property type="term" value="C:cytosol"/>
    <property type="evidence" value="ECO:0007669"/>
    <property type="project" value="TreeGrafter"/>
</dbReference>
<dbReference type="GO" id="GO:0005524">
    <property type="term" value="F:ATP binding"/>
    <property type="evidence" value="ECO:0007669"/>
    <property type="project" value="UniProtKB-UniRule"/>
</dbReference>
<dbReference type="GO" id="GO:0140096">
    <property type="term" value="F:catalytic activity, acting on a protein"/>
    <property type="evidence" value="ECO:0007669"/>
    <property type="project" value="UniProtKB-ARBA"/>
</dbReference>
<dbReference type="GO" id="GO:0004820">
    <property type="term" value="F:glycine-tRNA ligase activity"/>
    <property type="evidence" value="ECO:0007669"/>
    <property type="project" value="UniProtKB-UniRule"/>
</dbReference>
<dbReference type="GO" id="GO:0016740">
    <property type="term" value="F:transferase activity"/>
    <property type="evidence" value="ECO:0007669"/>
    <property type="project" value="UniProtKB-ARBA"/>
</dbReference>
<dbReference type="GO" id="GO:0006426">
    <property type="term" value="P:glycyl-tRNA aminoacylation"/>
    <property type="evidence" value="ECO:0007669"/>
    <property type="project" value="UniProtKB-UniRule"/>
</dbReference>
<dbReference type="CDD" id="cd00733">
    <property type="entry name" value="GlyRS_alpha_core"/>
    <property type="match status" value="1"/>
</dbReference>
<dbReference type="FunFam" id="3.30.930.10:FF:000006">
    <property type="entry name" value="Glycine--tRNA ligase alpha subunit"/>
    <property type="match status" value="1"/>
</dbReference>
<dbReference type="Gene3D" id="3.30.930.10">
    <property type="entry name" value="Bira Bifunctional Protein, Domain 2"/>
    <property type="match status" value="1"/>
</dbReference>
<dbReference type="Gene3D" id="1.20.58.180">
    <property type="entry name" value="Class II aaRS and biotin synthetases, domain 2"/>
    <property type="match status" value="1"/>
</dbReference>
<dbReference type="HAMAP" id="MF_00254">
    <property type="entry name" value="Gly_tRNA_synth_alpha"/>
    <property type="match status" value="1"/>
</dbReference>
<dbReference type="InterPro" id="IPR045864">
    <property type="entry name" value="aa-tRNA-synth_II/BPL/LPL"/>
</dbReference>
<dbReference type="InterPro" id="IPR006194">
    <property type="entry name" value="Gly-tRNA-synth_heterodimer"/>
</dbReference>
<dbReference type="InterPro" id="IPR002310">
    <property type="entry name" value="Gly-tRNA_ligase_asu"/>
</dbReference>
<dbReference type="NCBIfam" id="TIGR00388">
    <property type="entry name" value="glyQ"/>
    <property type="match status" value="1"/>
</dbReference>
<dbReference type="NCBIfam" id="NF006827">
    <property type="entry name" value="PRK09348.1"/>
    <property type="match status" value="1"/>
</dbReference>
<dbReference type="PANTHER" id="PTHR30075:SF2">
    <property type="entry name" value="GLYCINE--TRNA LIGASE, CHLOROPLASTIC_MITOCHONDRIAL 2"/>
    <property type="match status" value="1"/>
</dbReference>
<dbReference type="PANTHER" id="PTHR30075">
    <property type="entry name" value="GLYCYL-TRNA SYNTHETASE"/>
    <property type="match status" value="1"/>
</dbReference>
<dbReference type="Pfam" id="PF02091">
    <property type="entry name" value="tRNA-synt_2e"/>
    <property type="match status" value="1"/>
</dbReference>
<dbReference type="PRINTS" id="PR01044">
    <property type="entry name" value="TRNASYNTHGA"/>
</dbReference>
<dbReference type="SUPFAM" id="SSF55681">
    <property type="entry name" value="Class II aaRS and biotin synthetases"/>
    <property type="match status" value="1"/>
</dbReference>
<dbReference type="PROSITE" id="PS50861">
    <property type="entry name" value="AA_TRNA_LIGASE_II_GLYAB"/>
    <property type="match status" value="1"/>
</dbReference>
<comment type="catalytic activity">
    <reaction evidence="1">
        <text>tRNA(Gly) + glycine + ATP = glycyl-tRNA(Gly) + AMP + diphosphate</text>
        <dbReference type="Rhea" id="RHEA:16013"/>
        <dbReference type="Rhea" id="RHEA-COMP:9664"/>
        <dbReference type="Rhea" id="RHEA-COMP:9683"/>
        <dbReference type="ChEBI" id="CHEBI:30616"/>
        <dbReference type="ChEBI" id="CHEBI:33019"/>
        <dbReference type="ChEBI" id="CHEBI:57305"/>
        <dbReference type="ChEBI" id="CHEBI:78442"/>
        <dbReference type="ChEBI" id="CHEBI:78522"/>
        <dbReference type="ChEBI" id="CHEBI:456215"/>
        <dbReference type="EC" id="6.1.1.14"/>
    </reaction>
</comment>
<comment type="subunit">
    <text evidence="1">Tetramer of two alpha and two beta subunits.</text>
</comment>
<comment type="subcellular location">
    <subcellularLocation>
        <location evidence="1">Cytoplasm</location>
    </subcellularLocation>
</comment>
<comment type="similarity">
    <text evidence="1">Belongs to the class-II aminoacyl-tRNA synthetase family.</text>
</comment>
<name>SYGA_HELMI</name>
<reference key="1">
    <citation type="journal article" date="2008" name="J. Bacteriol.">
        <title>The genome of Heliobacterium modesticaldum, a phototrophic representative of the Firmicutes containing the simplest photosynthetic apparatus.</title>
        <authorList>
            <person name="Sattley W.M."/>
            <person name="Madigan M.T."/>
            <person name="Swingley W.D."/>
            <person name="Cheung P.C."/>
            <person name="Clocksin K.M."/>
            <person name="Conrad A.L."/>
            <person name="Dejesa L.C."/>
            <person name="Honchak B.M."/>
            <person name="Jung D.O."/>
            <person name="Karbach L.E."/>
            <person name="Kurdoglu A."/>
            <person name="Lahiri S."/>
            <person name="Mastrian S.D."/>
            <person name="Page L.E."/>
            <person name="Taylor H.L."/>
            <person name="Wang Z.T."/>
            <person name="Raymond J."/>
            <person name="Chen M."/>
            <person name="Blankenship R.E."/>
            <person name="Touchman J.W."/>
        </authorList>
    </citation>
    <scope>NUCLEOTIDE SEQUENCE [LARGE SCALE GENOMIC DNA]</scope>
    <source>
        <strain>ATCC 51547 / Ice1</strain>
    </source>
</reference>
<gene>
    <name evidence="1" type="primary">glyQ</name>
    <name type="ordered locus">Helmi_23820</name>
    <name type="ORF">HM1_2457</name>
</gene>
<feature type="chain" id="PRO_1000101199" description="Glycine--tRNA ligase alpha subunit">
    <location>
        <begin position="1"/>
        <end position="305"/>
    </location>
</feature>
<evidence type="ECO:0000255" key="1">
    <source>
        <dbReference type="HAMAP-Rule" id="MF_00254"/>
    </source>
</evidence>
<accession>B0TAF7</accession>